<sequence>MANAYKQAGVDIEAGYEAVSRMKKHVQTTMRKEVLGGLGGFGGMFDLSKFALEEPVLVSGTDGVGTKLMLAFMADKHDTIGIDAVAMCVNDIVVQGAEPLFFLDYIACGKAEPSKIENIVKGISEGCRQAGCALIGGETAEMPGMYSTEEYDLAGFTVGIVDKKKIVTGEKIEAGHVLIGLASSGIHSNGYSLVRKVLLEDGELSLDRIYGRLELPLGEELLKPTKIYVKPILELLKNHEVYGMAHITGGGFIENIPRMLPEGIGAEIELGSWKIQPIFSLLQEVGKLEEKEMFNIFNMGIGMVVAVKEEDAKDIVRLLEEQGETARIIGRTVQGAGVTFNGGKAL</sequence>
<keyword id="KW-0002">3D-structure</keyword>
<keyword id="KW-0067">ATP-binding</keyword>
<keyword id="KW-0963">Cytoplasm</keyword>
<keyword id="KW-0436">Ligase</keyword>
<keyword id="KW-0547">Nucleotide-binding</keyword>
<keyword id="KW-0658">Purine biosynthesis</keyword>
<keyword id="KW-1185">Reference proteome</keyword>
<comment type="catalytic activity">
    <reaction evidence="1">
        <text>2-formamido-N(1)-(5-O-phospho-beta-D-ribosyl)acetamidine + ATP = 5-amino-1-(5-phospho-beta-D-ribosyl)imidazole + ADP + phosphate + H(+)</text>
        <dbReference type="Rhea" id="RHEA:23032"/>
        <dbReference type="ChEBI" id="CHEBI:15378"/>
        <dbReference type="ChEBI" id="CHEBI:30616"/>
        <dbReference type="ChEBI" id="CHEBI:43474"/>
        <dbReference type="ChEBI" id="CHEBI:137981"/>
        <dbReference type="ChEBI" id="CHEBI:147287"/>
        <dbReference type="ChEBI" id="CHEBI:456216"/>
        <dbReference type="EC" id="6.3.3.1"/>
    </reaction>
</comment>
<comment type="pathway">
    <text evidence="1">Purine metabolism; IMP biosynthesis via de novo pathway; 5-amino-1-(5-phospho-D-ribosyl)imidazole from N(2)-formyl-N(1)-(5-phospho-D-ribosyl)glycinamide: step 2/2.</text>
</comment>
<comment type="subcellular location">
    <subcellularLocation>
        <location evidence="1">Cytoplasm</location>
    </subcellularLocation>
</comment>
<comment type="similarity">
    <text evidence="1">Belongs to the AIR synthase family.</text>
</comment>
<name>PUR5_BACAN</name>
<gene>
    <name evidence="1" type="primary">purM</name>
    <name type="ordered locus">BA_0296</name>
    <name type="ordered locus">GBAA_0296</name>
    <name type="ordered locus">BAS0283</name>
</gene>
<proteinExistence type="evidence at protein level"/>
<accession>Q81ZH0</accession>
<accession>Q6I4B7</accession>
<accession>Q6KY19</accession>
<dbReference type="EC" id="6.3.3.1" evidence="1"/>
<dbReference type="EMBL" id="AE016879">
    <property type="protein sequence ID" value="AAP24332.1"/>
    <property type="molecule type" value="Genomic_DNA"/>
</dbReference>
<dbReference type="EMBL" id="AE017334">
    <property type="protein sequence ID" value="AAT29383.1"/>
    <property type="molecule type" value="Genomic_DNA"/>
</dbReference>
<dbReference type="EMBL" id="AE017225">
    <property type="protein sequence ID" value="AAT52614.1"/>
    <property type="molecule type" value="Genomic_DNA"/>
</dbReference>
<dbReference type="RefSeq" id="NP_842846.1">
    <property type="nucleotide sequence ID" value="NC_003997.3"/>
</dbReference>
<dbReference type="RefSeq" id="WP_001262436.1">
    <property type="nucleotide sequence ID" value="NZ_WXXJ01000007.1"/>
</dbReference>
<dbReference type="RefSeq" id="YP_026563.1">
    <property type="nucleotide sequence ID" value="NC_005945.1"/>
</dbReference>
<dbReference type="PDB" id="2BTU">
    <property type="method" value="X-ray"/>
    <property type="resolution" value="2.31 A"/>
    <property type="chains" value="A/B=1-346"/>
</dbReference>
<dbReference type="PDBsum" id="2BTU"/>
<dbReference type="SMR" id="Q81ZH0"/>
<dbReference type="STRING" id="261594.GBAA_0296"/>
<dbReference type="DNASU" id="1085673"/>
<dbReference type="GeneID" id="45020355"/>
<dbReference type="KEGG" id="ban:BA_0296"/>
<dbReference type="KEGG" id="bar:GBAA_0296"/>
<dbReference type="KEGG" id="bat:BAS0283"/>
<dbReference type="PATRIC" id="fig|198094.11.peg.287"/>
<dbReference type="eggNOG" id="COG0150">
    <property type="taxonomic scope" value="Bacteria"/>
</dbReference>
<dbReference type="HOGENOM" id="CLU_047116_0_0_9"/>
<dbReference type="OMA" id="MTDYICV"/>
<dbReference type="OrthoDB" id="9802507at2"/>
<dbReference type="UniPathway" id="UPA00074">
    <property type="reaction ID" value="UER00129"/>
</dbReference>
<dbReference type="EvolutionaryTrace" id="Q81ZH0"/>
<dbReference type="Proteomes" id="UP000000427">
    <property type="component" value="Chromosome"/>
</dbReference>
<dbReference type="Proteomes" id="UP000000594">
    <property type="component" value="Chromosome"/>
</dbReference>
<dbReference type="GO" id="GO:0005829">
    <property type="term" value="C:cytosol"/>
    <property type="evidence" value="ECO:0007669"/>
    <property type="project" value="TreeGrafter"/>
</dbReference>
<dbReference type="GO" id="GO:0005524">
    <property type="term" value="F:ATP binding"/>
    <property type="evidence" value="ECO:0007669"/>
    <property type="project" value="UniProtKB-KW"/>
</dbReference>
<dbReference type="GO" id="GO:0004637">
    <property type="term" value="F:phosphoribosylamine-glycine ligase activity"/>
    <property type="evidence" value="ECO:0007669"/>
    <property type="project" value="TreeGrafter"/>
</dbReference>
<dbReference type="GO" id="GO:0004641">
    <property type="term" value="F:phosphoribosylformylglycinamidine cyclo-ligase activity"/>
    <property type="evidence" value="ECO:0007669"/>
    <property type="project" value="UniProtKB-UniRule"/>
</dbReference>
<dbReference type="GO" id="GO:0006189">
    <property type="term" value="P:'de novo' IMP biosynthetic process"/>
    <property type="evidence" value="ECO:0007669"/>
    <property type="project" value="UniProtKB-UniRule"/>
</dbReference>
<dbReference type="GO" id="GO:0046084">
    <property type="term" value="P:adenine biosynthetic process"/>
    <property type="evidence" value="ECO:0007669"/>
    <property type="project" value="TreeGrafter"/>
</dbReference>
<dbReference type="CDD" id="cd02196">
    <property type="entry name" value="PurM"/>
    <property type="match status" value="1"/>
</dbReference>
<dbReference type="FunFam" id="3.30.1330.10:FF:000001">
    <property type="entry name" value="Phosphoribosylformylglycinamidine cyclo-ligase"/>
    <property type="match status" value="1"/>
</dbReference>
<dbReference type="FunFam" id="3.90.650.10:FF:000001">
    <property type="entry name" value="Phosphoribosylformylglycinamidine cyclo-ligase"/>
    <property type="match status" value="1"/>
</dbReference>
<dbReference type="Gene3D" id="3.90.650.10">
    <property type="entry name" value="PurM-like C-terminal domain"/>
    <property type="match status" value="1"/>
</dbReference>
<dbReference type="Gene3D" id="3.30.1330.10">
    <property type="entry name" value="PurM-like, N-terminal domain"/>
    <property type="match status" value="1"/>
</dbReference>
<dbReference type="HAMAP" id="MF_00741">
    <property type="entry name" value="AIRS"/>
    <property type="match status" value="1"/>
</dbReference>
<dbReference type="InterPro" id="IPR010918">
    <property type="entry name" value="PurM-like_C_dom"/>
</dbReference>
<dbReference type="InterPro" id="IPR036676">
    <property type="entry name" value="PurM-like_C_sf"/>
</dbReference>
<dbReference type="InterPro" id="IPR016188">
    <property type="entry name" value="PurM-like_N"/>
</dbReference>
<dbReference type="InterPro" id="IPR036921">
    <property type="entry name" value="PurM-like_N_sf"/>
</dbReference>
<dbReference type="InterPro" id="IPR004733">
    <property type="entry name" value="PurM_cligase"/>
</dbReference>
<dbReference type="NCBIfam" id="TIGR00878">
    <property type="entry name" value="purM"/>
    <property type="match status" value="1"/>
</dbReference>
<dbReference type="PANTHER" id="PTHR10520:SF12">
    <property type="entry name" value="TRIFUNCTIONAL PURINE BIOSYNTHETIC PROTEIN ADENOSINE-3"/>
    <property type="match status" value="1"/>
</dbReference>
<dbReference type="PANTHER" id="PTHR10520">
    <property type="entry name" value="TRIFUNCTIONAL PURINE BIOSYNTHETIC PROTEIN ADENOSINE-3-RELATED"/>
    <property type="match status" value="1"/>
</dbReference>
<dbReference type="Pfam" id="PF00586">
    <property type="entry name" value="AIRS"/>
    <property type="match status" value="1"/>
</dbReference>
<dbReference type="Pfam" id="PF02769">
    <property type="entry name" value="AIRS_C"/>
    <property type="match status" value="1"/>
</dbReference>
<dbReference type="SUPFAM" id="SSF56042">
    <property type="entry name" value="PurM C-terminal domain-like"/>
    <property type="match status" value="1"/>
</dbReference>
<dbReference type="SUPFAM" id="SSF55326">
    <property type="entry name" value="PurM N-terminal domain-like"/>
    <property type="match status" value="1"/>
</dbReference>
<evidence type="ECO:0000255" key="1">
    <source>
        <dbReference type="HAMAP-Rule" id="MF_00741"/>
    </source>
</evidence>
<evidence type="ECO:0007829" key="2">
    <source>
        <dbReference type="PDB" id="2BTU"/>
    </source>
</evidence>
<organism>
    <name type="scientific">Bacillus anthracis</name>
    <dbReference type="NCBI Taxonomy" id="1392"/>
    <lineage>
        <taxon>Bacteria</taxon>
        <taxon>Bacillati</taxon>
        <taxon>Bacillota</taxon>
        <taxon>Bacilli</taxon>
        <taxon>Bacillales</taxon>
        <taxon>Bacillaceae</taxon>
        <taxon>Bacillus</taxon>
        <taxon>Bacillus cereus group</taxon>
    </lineage>
</organism>
<reference key="1">
    <citation type="journal article" date="2003" name="Nature">
        <title>The genome sequence of Bacillus anthracis Ames and comparison to closely related bacteria.</title>
        <authorList>
            <person name="Read T.D."/>
            <person name="Peterson S.N."/>
            <person name="Tourasse N.J."/>
            <person name="Baillie L.W."/>
            <person name="Paulsen I.T."/>
            <person name="Nelson K.E."/>
            <person name="Tettelin H."/>
            <person name="Fouts D.E."/>
            <person name="Eisen J.A."/>
            <person name="Gill S.R."/>
            <person name="Holtzapple E.K."/>
            <person name="Okstad O.A."/>
            <person name="Helgason E."/>
            <person name="Rilstone J."/>
            <person name="Wu M."/>
            <person name="Kolonay J.F."/>
            <person name="Beanan M.J."/>
            <person name="Dodson R.J."/>
            <person name="Brinkac L.M."/>
            <person name="Gwinn M.L."/>
            <person name="DeBoy R.T."/>
            <person name="Madpu R."/>
            <person name="Daugherty S.C."/>
            <person name="Durkin A.S."/>
            <person name="Haft D.H."/>
            <person name="Nelson W.C."/>
            <person name="Peterson J.D."/>
            <person name="Pop M."/>
            <person name="Khouri H.M."/>
            <person name="Radune D."/>
            <person name="Benton J.L."/>
            <person name="Mahamoud Y."/>
            <person name="Jiang L."/>
            <person name="Hance I.R."/>
            <person name="Weidman J.F."/>
            <person name="Berry K.J."/>
            <person name="Plaut R.D."/>
            <person name="Wolf A.M."/>
            <person name="Watkins K.L."/>
            <person name="Nierman W.C."/>
            <person name="Hazen A."/>
            <person name="Cline R.T."/>
            <person name="Redmond C."/>
            <person name="Thwaite J.E."/>
            <person name="White O."/>
            <person name="Salzberg S.L."/>
            <person name="Thomason B."/>
            <person name="Friedlander A.M."/>
            <person name="Koehler T.M."/>
            <person name="Hanna P.C."/>
            <person name="Kolstoe A.-B."/>
            <person name="Fraser C.M."/>
        </authorList>
    </citation>
    <scope>NUCLEOTIDE SEQUENCE [LARGE SCALE GENOMIC DNA]</scope>
    <source>
        <strain>Ames / isolate Porton</strain>
    </source>
</reference>
<reference key="2">
    <citation type="journal article" date="2009" name="J. Bacteriol.">
        <title>The complete genome sequence of Bacillus anthracis Ames 'Ancestor'.</title>
        <authorList>
            <person name="Ravel J."/>
            <person name="Jiang L."/>
            <person name="Stanley S.T."/>
            <person name="Wilson M.R."/>
            <person name="Decker R.S."/>
            <person name="Read T.D."/>
            <person name="Worsham P."/>
            <person name="Keim P.S."/>
            <person name="Salzberg S.L."/>
            <person name="Fraser-Liggett C.M."/>
            <person name="Rasko D.A."/>
        </authorList>
    </citation>
    <scope>NUCLEOTIDE SEQUENCE [LARGE SCALE GENOMIC DNA]</scope>
    <source>
        <strain>Ames ancestor</strain>
    </source>
</reference>
<reference key="3">
    <citation type="submission" date="2004-01" db="EMBL/GenBank/DDBJ databases">
        <title>Complete genome sequence of Bacillus anthracis Sterne.</title>
        <authorList>
            <person name="Brettin T.S."/>
            <person name="Bruce D."/>
            <person name="Challacombe J.F."/>
            <person name="Gilna P."/>
            <person name="Han C."/>
            <person name="Hill K."/>
            <person name="Hitchcock P."/>
            <person name="Jackson P."/>
            <person name="Keim P."/>
            <person name="Longmire J."/>
            <person name="Lucas S."/>
            <person name="Okinaka R."/>
            <person name="Richardson P."/>
            <person name="Rubin E."/>
            <person name="Tice H."/>
        </authorList>
    </citation>
    <scope>NUCLEOTIDE SEQUENCE [LARGE SCALE GENOMIC DNA]</scope>
    <source>
        <strain>Sterne</strain>
    </source>
</reference>
<protein>
    <recommendedName>
        <fullName evidence="1">Phosphoribosylformylglycinamidine cyclo-ligase</fullName>
        <ecNumber evidence="1">6.3.3.1</ecNumber>
    </recommendedName>
    <alternativeName>
        <fullName evidence="1">AIR synthase</fullName>
    </alternativeName>
    <alternativeName>
        <fullName evidence="1">AIRS</fullName>
    </alternativeName>
    <alternativeName>
        <fullName evidence="1">Phosphoribosyl-aminoimidazole synthetase</fullName>
    </alternativeName>
</protein>
<feature type="chain" id="PRO_0000148194" description="Phosphoribosylformylglycinamidine cyclo-ligase">
    <location>
        <begin position="1"/>
        <end position="346"/>
    </location>
</feature>
<feature type="turn" evidence="2">
    <location>
        <begin position="19"/>
        <end position="26"/>
    </location>
</feature>
<feature type="helix" evidence="2">
    <location>
        <begin position="27"/>
        <end position="29"/>
    </location>
</feature>
<feature type="strand" evidence="2">
    <location>
        <begin position="38"/>
        <end position="40"/>
    </location>
</feature>
<feature type="strand" evidence="2">
    <location>
        <begin position="44"/>
        <end position="46"/>
    </location>
</feature>
<feature type="strand" evidence="2">
    <location>
        <begin position="53"/>
        <end position="63"/>
    </location>
</feature>
<feature type="helix" evidence="2">
    <location>
        <begin position="68"/>
        <end position="74"/>
    </location>
</feature>
<feature type="helix" evidence="2">
    <location>
        <begin position="80"/>
        <end position="93"/>
    </location>
</feature>
<feature type="turn" evidence="2">
    <location>
        <begin position="94"/>
        <end position="96"/>
    </location>
</feature>
<feature type="strand" evidence="2">
    <location>
        <begin position="98"/>
        <end position="110"/>
    </location>
</feature>
<feature type="helix" evidence="2">
    <location>
        <begin position="113"/>
        <end position="130"/>
    </location>
</feature>
<feature type="strand" evidence="2">
    <location>
        <begin position="133"/>
        <end position="141"/>
    </location>
</feature>
<feature type="strand" evidence="2">
    <location>
        <begin position="152"/>
        <end position="162"/>
    </location>
</feature>
<feature type="strand" evidence="2">
    <location>
        <begin position="177"/>
        <end position="182"/>
    </location>
</feature>
<feature type="strand" evidence="2">
    <location>
        <begin position="184"/>
        <end position="186"/>
    </location>
</feature>
<feature type="helix" evidence="2">
    <location>
        <begin position="191"/>
        <end position="199"/>
    </location>
</feature>
<feature type="strand" evidence="2">
    <location>
        <begin position="211"/>
        <end position="213"/>
    </location>
</feature>
<feature type="helix" evidence="2">
    <location>
        <begin position="217"/>
        <end position="221"/>
    </location>
</feature>
<feature type="helix" evidence="2">
    <location>
        <begin position="229"/>
        <end position="238"/>
    </location>
</feature>
<feature type="helix" evidence="2">
    <location>
        <begin position="251"/>
        <end position="255"/>
    </location>
</feature>
<feature type="helix" evidence="2">
    <location>
        <begin position="257"/>
        <end position="259"/>
    </location>
</feature>
<feature type="strand" evidence="2">
    <location>
        <begin position="264"/>
        <end position="269"/>
    </location>
</feature>
<feature type="helix" evidence="2">
    <location>
        <begin position="277"/>
        <end position="286"/>
    </location>
</feature>
<feature type="helix" evidence="2">
    <location>
        <begin position="290"/>
        <end position="293"/>
    </location>
</feature>
<feature type="turn" evidence="2">
    <location>
        <begin position="294"/>
        <end position="296"/>
    </location>
</feature>
<feature type="strand" evidence="2">
    <location>
        <begin position="301"/>
        <end position="307"/>
    </location>
</feature>
<feature type="turn" evidence="2">
    <location>
        <begin position="309"/>
        <end position="311"/>
    </location>
</feature>
<feature type="helix" evidence="2">
    <location>
        <begin position="312"/>
        <end position="322"/>
    </location>
</feature>
<feature type="strand" evidence="2">
    <location>
        <begin position="326"/>
        <end position="341"/>
    </location>
</feature>